<keyword id="KW-0134">Cell wall</keyword>
<keyword id="KW-0378">Hydrolase</keyword>
<keyword id="KW-1185">Reference proteome</keyword>
<keyword id="KW-0964">Secreted</keyword>
<keyword id="KW-0732">Signal</keyword>
<keyword id="KW-0843">Virulence</keyword>
<sequence length="521" mass="56533">MGSEHPVDGMTRRQFFAKAAAATTAGAFMSLAGPIIEKAYGAGPCPGHLTDIEHIVLLMQENRSFDHYFGTLSDTRGFDDTTPPVVFAQSGWNPMTQAVDPAGVTLPYRFDTTRGPLVAGECVNDPDHSWIGMHNSWNGGANDNWLPAQVPFSPLQGNVPVTMGFYTRRDLPIHYLLADTFTVCDGYFCSLLGGTTPNRLYWMSAWIDPDGTDGGPVLIEPNIQPLQHYSWRIMPENLEDAGVSWKVYQNKLLGALNNTVVGYNGLVNDFKQAADPRSNLARFGISPTYPLDFAADVRNNRLPKVSWVLPGFLLSEHPAFPVNVGAVAIVDALRILLSNPAVWEKTALIVNYDENGGFFDHVVPPTPPPGTPGEFVTVPDIDSVPGSGGIRGPIGLGFRVPCLVISPYSRGPLMVHDTFDHTSTLKLIRARFGVPVPNLTAWRDATVGDMTSTFNFAAPPNPSKPNLDHPRLNALPKLPQCVPNAVLGTVTKTAIPYRVPFPQSMPTQETAPTRGIPSGLC</sequence>
<reference key="1">
    <citation type="journal article" date="1996" name="Infect. Immun.">
        <title>Biochemical and molecular analysis of phospholipase C and phospholipase D activity in mycobacteria.</title>
        <authorList>
            <person name="Johansen K.A."/>
            <person name="Gill R.E."/>
            <person name="Vasil M.L."/>
        </authorList>
    </citation>
    <scope>NUCLEOTIDE SEQUENCE [GENOMIC DNA]</scope>
    <scope>FUNCTION</scope>
    <scope>CATALYTIC ACTIVITY</scope>
    <scope>SUBCELLULAR LOCATION</scope>
    <source>
        <strain>ATCC 25618 / H37Rv</strain>
    </source>
</reference>
<reference key="2">
    <citation type="journal article" date="1998" name="Nature">
        <title>Deciphering the biology of Mycobacterium tuberculosis from the complete genome sequence.</title>
        <authorList>
            <person name="Cole S.T."/>
            <person name="Brosch R."/>
            <person name="Parkhill J."/>
            <person name="Garnier T."/>
            <person name="Churcher C.M."/>
            <person name="Harris D.E."/>
            <person name="Gordon S.V."/>
            <person name="Eiglmeier K."/>
            <person name="Gas S."/>
            <person name="Barry C.E. III"/>
            <person name="Tekaia F."/>
            <person name="Badcock K."/>
            <person name="Basham D."/>
            <person name="Brown D."/>
            <person name="Chillingworth T."/>
            <person name="Connor R."/>
            <person name="Davies R.M."/>
            <person name="Devlin K."/>
            <person name="Feltwell T."/>
            <person name="Gentles S."/>
            <person name="Hamlin N."/>
            <person name="Holroyd S."/>
            <person name="Hornsby T."/>
            <person name="Jagels K."/>
            <person name="Krogh A."/>
            <person name="McLean J."/>
            <person name="Moule S."/>
            <person name="Murphy L.D."/>
            <person name="Oliver S."/>
            <person name="Osborne J."/>
            <person name="Quail M.A."/>
            <person name="Rajandream M.A."/>
            <person name="Rogers J."/>
            <person name="Rutter S."/>
            <person name="Seeger K."/>
            <person name="Skelton S."/>
            <person name="Squares S."/>
            <person name="Squares R."/>
            <person name="Sulston J.E."/>
            <person name="Taylor K."/>
            <person name="Whitehead S."/>
            <person name="Barrell B.G."/>
        </authorList>
    </citation>
    <scope>NUCLEOTIDE SEQUENCE [LARGE SCALE GENOMIC DNA]</scope>
    <source>
        <strain>ATCC 25618 / H37Rv</strain>
    </source>
</reference>
<reference key="3">
    <citation type="journal article" date="2002" name="Mol. Microbiol.">
        <title>Phospholipases C are involved in the virulence of Mycobacterium tuberculosis.</title>
        <authorList>
            <person name="Raynaud C."/>
            <person name="Guilhot C."/>
            <person name="Rauzier J."/>
            <person name="Bordat Y."/>
            <person name="Pelicic V."/>
            <person name="Manganelli R."/>
            <person name="Smith I."/>
            <person name="Gicquel B."/>
            <person name="Jackson M."/>
        </authorList>
    </citation>
    <scope>INDUCTION</scope>
    <source>
        <strain>H37Rv</strain>
    </source>
</reference>
<reference key="4">
    <citation type="journal article" date="2010" name="Biochim. Biophys. Acta">
        <title>Evidence for the cytotoxic effects of Mycobacterium tuberculosis phospholipase C towards macrophages.</title>
        <authorList>
            <person name="Bakala N'goma J.C."/>
            <person name="Schue M."/>
            <person name="Carriere F."/>
            <person name="Geerlof A."/>
            <person name="Canaan S."/>
        </authorList>
    </citation>
    <scope>FUNCTION</scope>
    <scope>CATALYTIC ACTIVITY</scope>
    <scope>BIOPHYSICOCHEMICAL PROPERTIES</scope>
    <scope>SUBCELLULAR LOCATION</scope>
    <source>
        <strain>H37Rv</strain>
    </source>
</reference>
<reference key="5">
    <citation type="journal article" date="2011" name="Mol. Cell. Proteomics">
        <title>Proteogenomic analysis of Mycobacterium tuberculosis by high resolution mass spectrometry.</title>
        <authorList>
            <person name="Kelkar D.S."/>
            <person name="Kumar D."/>
            <person name="Kumar P."/>
            <person name="Balakrishnan L."/>
            <person name="Muthusamy B."/>
            <person name="Yadav A.K."/>
            <person name="Shrivastava P."/>
            <person name="Marimuthu A."/>
            <person name="Anand S."/>
            <person name="Sundaram H."/>
            <person name="Kingsbury R."/>
            <person name="Harsha H.C."/>
            <person name="Nair B."/>
            <person name="Prasad T.S."/>
            <person name="Chauhan D.S."/>
            <person name="Katoch K."/>
            <person name="Katoch V.M."/>
            <person name="Kumar P."/>
            <person name="Chaerkady R."/>
            <person name="Ramachandran S."/>
            <person name="Dash D."/>
            <person name="Pandey A."/>
        </authorList>
    </citation>
    <scope>IDENTIFICATION BY MASS SPECTROMETRY [LARGE SCALE ANALYSIS]</scope>
    <source>
        <strain>ATCC 25618 / H37Rv</strain>
    </source>
</reference>
<accession>P9WIB3</accession>
<accession>L0TAY7</accession>
<accession>P95246</accession>
<accession>Q50561</accession>
<name>PHLB_MYCTU</name>
<dbReference type="EC" id="3.1.4.3" evidence="4 5"/>
<dbReference type="EMBL" id="U49511">
    <property type="protein sequence ID" value="AAC18944.1"/>
    <property type="molecule type" value="Genomic_DNA"/>
</dbReference>
<dbReference type="EMBL" id="AL123456">
    <property type="protein sequence ID" value="CCP45138.1"/>
    <property type="status" value="ALT_INIT"/>
    <property type="molecule type" value="Genomic_DNA"/>
</dbReference>
<dbReference type="PIR" id="G70662">
    <property type="entry name" value="G70662"/>
</dbReference>
<dbReference type="RefSeq" id="NP_216866.1">
    <property type="nucleotide sequence ID" value="NC_000962.3"/>
</dbReference>
<dbReference type="SMR" id="P9WIB3"/>
<dbReference type="FunCoup" id="P9WIB3">
    <property type="interactions" value="30"/>
</dbReference>
<dbReference type="STRING" id="83332.Rv2350c"/>
<dbReference type="SwissLipids" id="SLP:000001396"/>
<dbReference type="PaxDb" id="83332-Rv2350c"/>
<dbReference type="DNASU" id="885999"/>
<dbReference type="GeneID" id="885999"/>
<dbReference type="KEGG" id="mtu:Rv2350c"/>
<dbReference type="TubercuList" id="Rv2350c"/>
<dbReference type="eggNOG" id="COG3511">
    <property type="taxonomic scope" value="Bacteria"/>
</dbReference>
<dbReference type="InParanoid" id="P9WIB3"/>
<dbReference type="OrthoDB" id="4181857at2"/>
<dbReference type="PHI-base" id="PHI:5289"/>
<dbReference type="Proteomes" id="UP000001584">
    <property type="component" value="Chromosome"/>
</dbReference>
<dbReference type="GO" id="GO:0005576">
    <property type="term" value="C:extracellular region"/>
    <property type="evidence" value="ECO:0000314"/>
    <property type="project" value="MTBBASE"/>
</dbReference>
<dbReference type="GO" id="GO:0034480">
    <property type="term" value="F:phosphatidylcholine phospholipase C activity"/>
    <property type="evidence" value="ECO:0000315"/>
    <property type="project" value="MTBBASE"/>
</dbReference>
<dbReference type="GO" id="GO:0004629">
    <property type="term" value="F:phospholipase C activity"/>
    <property type="evidence" value="ECO:0000314"/>
    <property type="project" value="MTBBASE"/>
</dbReference>
<dbReference type="GO" id="GO:0004767">
    <property type="term" value="F:sphingomyelin phosphodiesterase activity"/>
    <property type="evidence" value="ECO:0007669"/>
    <property type="project" value="RHEA"/>
</dbReference>
<dbReference type="GO" id="GO:0052008">
    <property type="term" value="P:symbiont-mediated disruption of host cellular anatomical structure"/>
    <property type="evidence" value="ECO:0000314"/>
    <property type="project" value="MTBBASE"/>
</dbReference>
<dbReference type="FunFam" id="3.40.720.10:FF:000034">
    <property type="entry name" value="Membrane-associated phospholipase C"/>
    <property type="match status" value="1"/>
</dbReference>
<dbReference type="FunFam" id="3.40.720.10:FF:000036">
    <property type="entry name" value="Membrane-associated phospholipase C"/>
    <property type="match status" value="1"/>
</dbReference>
<dbReference type="Gene3D" id="3.40.720.10">
    <property type="entry name" value="Alkaline Phosphatase, subunit A"/>
    <property type="match status" value="2"/>
</dbReference>
<dbReference type="InterPro" id="IPR017850">
    <property type="entry name" value="Alkaline_phosphatase_core_sf"/>
</dbReference>
<dbReference type="InterPro" id="IPR007312">
    <property type="entry name" value="Phosphoesterase"/>
</dbReference>
<dbReference type="InterPro" id="IPR006311">
    <property type="entry name" value="TAT_signal"/>
</dbReference>
<dbReference type="PANTHER" id="PTHR31956:SF1">
    <property type="entry name" value="NON-SPECIFIC PHOSPHOLIPASE C1"/>
    <property type="match status" value="1"/>
</dbReference>
<dbReference type="PANTHER" id="PTHR31956">
    <property type="entry name" value="NON-SPECIFIC PHOSPHOLIPASE C4-RELATED"/>
    <property type="match status" value="1"/>
</dbReference>
<dbReference type="Pfam" id="PF04185">
    <property type="entry name" value="Phosphoesterase"/>
    <property type="match status" value="1"/>
</dbReference>
<dbReference type="PROSITE" id="PS51318">
    <property type="entry name" value="TAT"/>
    <property type="match status" value="1"/>
</dbReference>
<proteinExistence type="evidence at protein level"/>
<protein>
    <recommendedName>
        <fullName evidence="9">Phospholipase C B</fullName>
        <shortName evidence="7">PLC-B</shortName>
        <ecNumber evidence="4 5">3.1.4.3</ecNumber>
    </recommendedName>
    <alternativeName>
        <fullName evidence="8">Mycobacterial phospholipase C B</fullName>
    </alternativeName>
</protein>
<feature type="signal peptide" description="Tat-type signal" evidence="1">
    <location>
        <begin position="1"/>
        <end position="39"/>
    </location>
</feature>
<feature type="chain" id="PRO_0000023943" description="Phospholipase C B">
    <location>
        <begin position="40"/>
        <end position="521"/>
    </location>
</feature>
<feature type="region of interest" description="Disordered" evidence="2">
    <location>
        <begin position="501"/>
        <end position="521"/>
    </location>
</feature>
<feature type="sequence conflict" description="In Ref. 1; AAC18944." evidence="9" ref="1">
    <original>P</original>
    <variation>T</variation>
    <location>
        <position position="303"/>
    </location>
</feature>
<feature type="sequence conflict" description="In Ref. 1; AAC18944." evidence="9" ref="1">
    <original>P</original>
    <variation>A</variation>
    <location>
        <position position="393"/>
    </location>
</feature>
<feature type="sequence conflict" description="In Ref. 1; AAC18944." evidence="9" ref="1">
    <original>F</original>
    <variation>P</variation>
    <location>
        <position position="398"/>
    </location>
</feature>
<feature type="sequence conflict" description="In Ref. 1; AAC18944." evidence="9" ref="1">
    <original>V</original>
    <variation>F</variation>
    <location>
        <position position="404"/>
    </location>
</feature>
<feature type="sequence conflict" description="In Ref. 1; AAC18944." evidence="9" ref="1">
    <original>SR</original>
    <variation>T</variation>
    <location>
        <begin position="409"/>
        <end position="410"/>
    </location>
</feature>
<feature type="sequence conflict" description="In Ref. 1; AAC18944." evidence="9" ref="1">
    <original>M</original>
    <variation>I</variation>
    <location>
        <position position="450"/>
    </location>
</feature>
<feature type="sequence conflict" description="In Ref. 1; AAC18944." evidence="9" ref="1">
    <original>LN</original>
    <variation>AQC</variation>
    <location>
        <begin position="472"/>
        <end position="473"/>
    </location>
</feature>
<comment type="function">
    <text evidence="4 5">Involved in virulence (PubMed:20736081). Induces cytotoxic effects on mouse macrophage cell lines, via direct or indirect enzymatic hydrolysis of cell membrane phospholipids (PubMed:20736081). Hydrolyzes phosphatidylcholine and sphingomyelin (PubMed:20736081, PubMed:8757862). Does not have hemolytic activity (PubMed:20736081).</text>
</comment>
<comment type="catalytic activity">
    <reaction evidence="4 5">
        <text>a 1,2-diacyl-sn-glycero-3-phosphocholine + H2O = phosphocholine + a 1,2-diacyl-sn-glycerol + H(+)</text>
        <dbReference type="Rhea" id="RHEA:10604"/>
        <dbReference type="ChEBI" id="CHEBI:15377"/>
        <dbReference type="ChEBI" id="CHEBI:15378"/>
        <dbReference type="ChEBI" id="CHEBI:17815"/>
        <dbReference type="ChEBI" id="CHEBI:57643"/>
        <dbReference type="ChEBI" id="CHEBI:295975"/>
        <dbReference type="EC" id="3.1.4.3"/>
    </reaction>
    <physiologicalReaction direction="left-to-right" evidence="4 5">
        <dbReference type="Rhea" id="RHEA:10605"/>
    </physiologicalReaction>
</comment>
<comment type="catalytic activity">
    <reaction evidence="5">
        <text>a sphingomyelin + H2O = phosphocholine + an N-acylsphing-4-enine + H(+)</text>
        <dbReference type="Rhea" id="RHEA:19253"/>
        <dbReference type="ChEBI" id="CHEBI:15377"/>
        <dbReference type="ChEBI" id="CHEBI:15378"/>
        <dbReference type="ChEBI" id="CHEBI:17636"/>
        <dbReference type="ChEBI" id="CHEBI:52639"/>
        <dbReference type="ChEBI" id="CHEBI:295975"/>
    </reaction>
    <physiologicalReaction direction="left-to-right" evidence="5">
        <dbReference type="Rhea" id="RHEA:19254"/>
    </physiologicalReaction>
</comment>
<comment type="catalytic activity">
    <reaction evidence="4">
        <text>1,2-dihexadecanoyl-sn-glycero-3-phosphocholine + H2O = 1,2-dihexadecanoyl-sn-glycerol + phosphocholine + H(+)</text>
        <dbReference type="Rhea" id="RHEA:45304"/>
        <dbReference type="ChEBI" id="CHEBI:15377"/>
        <dbReference type="ChEBI" id="CHEBI:15378"/>
        <dbReference type="ChEBI" id="CHEBI:72999"/>
        <dbReference type="ChEBI" id="CHEBI:82929"/>
        <dbReference type="ChEBI" id="CHEBI:295975"/>
    </reaction>
    <physiologicalReaction direction="left-to-right" evidence="4">
        <dbReference type="Rhea" id="RHEA:45305"/>
    </physiologicalReaction>
</comment>
<comment type="biophysicochemical properties">
    <phDependence>
        <text evidence="4">Optimum pH is 8.</text>
    </phDependence>
    <temperatureDependence>
        <text evidence="4">Optimum temperature is 37 degrees Celsius.</text>
    </temperatureDependence>
</comment>
<comment type="subcellular location">
    <subcellularLocation>
        <location evidence="4">Secreted</location>
        <location evidence="4">Cell wall</location>
    </subcellularLocation>
    <text evidence="4 5">Remains associated with the cell.</text>
</comment>
<comment type="induction">
    <text evidence="3">Expression is induced in vitro in the presence of phosphatidylcholine. Also induced upon infection of THP-1 macrophages.</text>
</comment>
<comment type="PTM">
    <text evidence="1">Predicted to be exported by the Tat system. The position of the signal peptide cleavage has not been experimentally proven.</text>
</comment>
<comment type="miscellaneous">
    <text evidence="9">Polymorphism was discovered in the phospholipase plcA/B/C region.</text>
</comment>
<comment type="similarity">
    <text evidence="9">Belongs to the bacterial phospholipase C family.</text>
</comment>
<comment type="sequence caution" evidence="9">
    <conflict type="erroneous initiation">
        <sequence resource="EMBL-CDS" id="CCP45138"/>
    </conflict>
    <text>Truncated N-terminus.</text>
</comment>
<organism>
    <name type="scientific">Mycobacterium tuberculosis (strain ATCC 25618 / H37Rv)</name>
    <dbReference type="NCBI Taxonomy" id="83332"/>
    <lineage>
        <taxon>Bacteria</taxon>
        <taxon>Bacillati</taxon>
        <taxon>Actinomycetota</taxon>
        <taxon>Actinomycetes</taxon>
        <taxon>Mycobacteriales</taxon>
        <taxon>Mycobacteriaceae</taxon>
        <taxon>Mycobacterium</taxon>
        <taxon>Mycobacterium tuberculosis complex</taxon>
    </lineage>
</organism>
<evidence type="ECO:0000255" key="1">
    <source>
        <dbReference type="PROSITE-ProRule" id="PRU00648"/>
    </source>
</evidence>
<evidence type="ECO:0000256" key="2">
    <source>
        <dbReference type="SAM" id="MobiDB-lite"/>
    </source>
</evidence>
<evidence type="ECO:0000269" key="3">
    <source>
    </source>
</evidence>
<evidence type="ECO:0000269" key="4">
    <source>
    </source>
</evidence>
<evidence type="ECO:0000269" key="5">
    <source>
    </source>
</evidence>
<evidence type="ECO:0000303" key="6">
    <source>
    </source>
</evidence>
<evidence type="ECO:0000303" key="7">
    <source>
    </source>
</evidence>
<evidence type="ECO:0000303" key="8">
    <source>
    </source>
</evidence>
<evidence type="ECO:0000305" key="9"/>
<gene>
    <name evidence="6" type="primary">plcB</name>
    <name evidence="8" type="synonym">mpcB</name>
    <name type="ordered locus">Rv2350c</name>
    <name type="ORF">MTCY98.19c</name>
</gene>